<keyword id="KW-0414">Isoprene biosynthesis</keyword>
<keyword id="KW-0464">Manganese</keyword>
<keyword id="KW-0479">Metal-binding</keyword>
<keyword id="KW-0521">NADP</keyword>
<keyword id="KW-0560">Oxidoreductase</keyword>
<feature type="chain" id="PRO_1000098486" description="1-deoxy-D-xylulose 5-phosphate reductoisomerase">
    <location>
        <begin position="1"/>
        <end position="385"/>
    </location>
</feature>
<feature type="binding site" evidence="1">
    <location>
        <position position="10"/>
    </location>
    <ligand>
        <name>NADPH</name>
        <dbReference type="ChEBI" id="CHEBI:57783"/>
    </ligand>
</feature>
<feature type="binding site" evidence="1">
    <location>
        <position position="11"/>
    </location>
    <ligand>
        <name>NADPH</name>
        <dbReference type="ChEBI" id="CHEBI:57783"/>
    </ligand>
</feature>
<feature type="binding site" evidence="1">
    <location>
        <position position="12"/>
    </location>
    <ligand>
        <name>NADPH</name>
        <dbReference type="ChEBI" id="CHEBI:57783"/>
    </ligand>
</feature>
<feature type="binding site" evidence="1">
    <location>
        <position position="13"/>
    </location>
    <ligand>
        <name>NADPH</name>
        <dbReference type="ChEBI" id="CHEBI:57783"/>
    </ligand>
</feature>
<feature type="binding site" evidence="1">
    <location>
        <position position="124"/>
    </location>
    <ligand>
        <name>NADPH</name>
        <dbReference type="ChEBI" id="CHEBI:57783"/>
    </ligand>
</feature>
<feature type="binding site" evidence="1">
    <location>
        <position position="125"/>
    </location>
    <ligand>
        <name>1-deoxy-D-xylulose 5-phosphate</name>
        <dbReference type="ChEBI" id="CHEBI:57792"/>
    </ligand>
</feature>
<feature type="binding site" evidence="1">
    <location>
        <position position="126"/>
    </location>
    <ligand>
        <name>NADPH</name>
        <dbReference type="ChEBI" id="CHEBI:57783"/>
    </ligand>
</feature>
<feature type="binding site" evidence="1">
    <location>
        <position position="150"/>
    </location>
    <ligand>
        <name>Mn(2+)</name>
        <dbReference type="ChEBI" id="CHEBI:29035"/>
    </ligand>
</feature>
<feature type="binding site" evidence="1">
    <location>
        <position position="151"/>
    </location>
    <ligand>
        <name>1-deoxy-D-xylulose 5-phosphate</name>
        <dbReference type="ChEBI" id="CHEBI:57792"/>
    </ligand>
</feature>
<feature type="binding site" evidence="1">
    <location>
        <position position="152"/>
    </location>
    <ligand>
        <name>1-deoxy-D-xylulose 5-phosphate</name>
        <dbReference type="ChEBI" id="CHEBI:57792"/>
    </ligand>
</feature>
<feature type="binding site" evidence="1">
    <location>
        <position position="152"/>
    </location>
    <ligand>
        <name>Mn(2+)</name>
        <dbReference type="ChEBI" id="CHEBI:29035"/>
    </ligand>
</feature>
<feature type="binding site" evidence="1">
    <location>
        <position position="176"/>
    </location>
    <ligand>
        <name>1-deoxy-D-xylulose 5-phosphate</name>
        <dbReference type="ChEBI" id="CHEBI:57792"/>
    </ligand>
</feature>
<feature type="binding site" evidence="1">
    <location>
        <position position="199"/>
    </location>
    <ligand>
        <name>1-deoxy-D-xylulose 5-phosphate</name>
        <dbReference type="ChEBI" id="CHEBI:57792"/>
    </ligand>
</feature>
<feature type="binding site" evidence="1">
    <location>
        <position position="205"/>
    </location>
    <ligand>
        <name>NADPH</name>
        <dbReference type="ChEBI" id="CHEBI:57783"/>
    </ligand>
</feature>
<feature type="binding site" evidence="1">
    <location>
        <position position="212"/>
    </location>
    <ligand>
        <name>1-deoxy-D-xylulose 5-phosphate</name>
        <dbReference type="ChEBI" id="CHEBI:57792"/>
    </ligand>
</feature>
<feature type="binding site" evidence="1">
    <location>
        <position position="217"/>
    </location>
    <ligand>
        <name>1-deoxy-D-xylulose 5-phosphate</name>
        <dbReference type="ChEBI" id="CHEBI:57792"/>
    </ligand>
</feature>
<feature type="binding site" evidence="1">
    <location>
        <position position="218"/>
    </location>
    <ligand>
        <name>1-deoxy-D-xylulose 5-phosphate</name>
        <dbReference type="ChEBI" id="CHEBI:57792"/>
    </ligand>
</feature>
<feature type="binding site" evidence="1">
    <location>
        <position position="221"/>
    </location>
    <ligand>
        <name>1-deoxy-D-xylulose 5-phosphate</name>
        <dbReference type="ChEBI" id="CHEBI:57792"/>
    </ligand>
</feature>
<feature type="binding site" evidence="1">
    <location>
        <position position="221"/>
    </location>
    <ligand>
        <name>Mn(2+)</name>
        <dbReference type="ChEBI" id="CHEBI:29035"/>
    </ligand>
</feature>
<reference key="1">
    <citation type="submission" date="2008-05" db="EMBL/GenBank/DDBJ databases">
        <title>Complete genome sequence of Clostridium botulinum E3 str. Alaska E43.</title>
        <authorList>
            <person name="Brinkac L.M."/>
            <person name="Brown J.L."/>
            <person name="Bruce D."/>
            <person name="Detter C."/>
            <person name="Munk C."/>
            <person name="Smith L.A."/>
            <person name="Smith T.J."/>
            <person name="Sutton G."/>
            <person name="Brettin T.S."/>
        </authorList>
    </citation>
    <scope>NUCLEOTIDE SEQUENCE [LARGE SCALE GENOMIC DNA]</scope>
    <source>
        <strain>Alaska E43 / Type E3</strain>
    </source>
</reference>
<dbReference type="EC" id="1.1.1.267" evidence="1"/>
<dbReference type="EMBL" id="CP001078">
    <property type="protein sequence ID" value="ACD52648.1"/>
    <property type="molecule type" value="Genomic_DNA"/>
</dbReference>
<dbReference type="RefSeq" id="WP_012450747.1">
    <property type="nucleotide sequence ID" value="NC_010723.1"/>
</dbReference>
<dbReference type="SMR" id="B2V4G1"/>
<dbReference type="KEGG" id="cbt:CLH_1216"/>
<dbReference type="HOGENOM" id="CLU_035714_4_0_9"/>
<dbReference type="UniPathway" id="UPA00056">
    <property type="reaction ID" value="UER00092"/>
</dbReference>
<dbReference type="GO" id="GO:0030604">
    <property type="term" value="F:1-deoxy-D-xylulose-5-phosphate reductoisomerase activity"/>
    <property type="evidence" value="ECO:0007669"/>
    <property type="project" value="UniProtKB-UniRule"/>
</dbReference>
<dbReference type="GO" id="GO:0030145">
    <property type="term" value="F:manganese ion binding"/>
    <property type="evidence" value="ECO:0007669"/>
    <property type="project" value="TreeGrafter"/>
</dbReference>
<dbReference type="GO" id="GO:0070402">
    <property type="term" value="F:NADPH binding"/>
    <property type="evidence" value="ECO:0007669"/>
    <property type="project" value="InterPro"/>
</dbReference>
<dbReference type="GO" id="GO:0051484">
    <property type="term" value="P:isopentenyl diphosphate biosynthetic process, methylerythritol 4-phosphate pathway involved in terpenoid biosynthetic process"/>
    <property type="evidence" value="ECO:0007669"/>
    <property type="project" value="TreeGrafter"/>
</dbReference>
<dbReference type="FunFam" id="3.40.50.720:FF:000045">
    <property type="entry name" value="1-deoxy-D-xylulose 5-phosphate reductoisomerase"/>
    <property type="match status" value="1"/>
</dbReference>
<dbReference type="Gene3D" id="1.10.1740.10">
    <property type="match status" value="1"/>
</dbReference>
<dbReference type="Gene3D" id="3.40.50.720">
    <property type="entry name" value="NAD(P)-binding Rossmann-like Domain"/>
    <property type="match status" value="1"/>
</dbReference>
<dbReference type="HAMAP" id="MF_00183">
    <property type="entry name" value="DXP_reductoisom"/>
    <property type="match status" value="1"/>
</dbReference>
<dbReference type="InterPro" id="IPR003821">
    <property type="entry name" value="DXP_reductoisomerase"/>
</dbReference>
<dbReference type="InterPro" id="IPR013644">
    <property type="entry name" value="DXP_reductoisomerase_C"/>
</dbReference>
<dbReference type="InterPro" id="IPR013512">
    <property type="entry name" value="DXP_reductoisomerase_N"/>
</dbReference>
<dbReference type="InterPro" id="IPR026877">
    <property type="entry name" value="DXPR_C"/>
</dbReference>
<dbReference type="InterPro" id="IPR036169">
    <property type="entry name" value="DXPR_C_sf"/>
</dbReference>
<dbReference type="InterPro" id="IPR036291">
    <property type="entry name" value="NAD(P)-bd_dom_sf"/>
</dbReference>
<dbReference type="NCBIfam" id="TIGR00243">
    <property type="entry name" value="Dxr"/>
    <property type="match status" value="1"/>
</dbReference>
<dbReference type="NCBIfam" id="NF009114">
    <property type="entry name" value="PRK12464.1"/>
    <property type="match status" value="1"/>
</dbReference>
<dbReference type="PANTHER" id="PTHR30525">
    <property type="entry name" value="1-DEOXY-D-XYLULOSE 5-PHOSPHATE REDUCTOISOMERASE"/>
    <property type="match status" value="1"/>
</dbReference>
<dbReference type="PANTHER" id="PTHR30525:SF0">
    <property type="entry name" value="1-DEOXY-D-XYLULOSE 5-PHOSPHATE REDUCTOISOMERASE, CHLOROPLASTIC"/>
    <property type="match status" value="1"/>
</dbReference>
<dbReference type="Pfam" id="PF08436">
    <property type="entry name" value="DXP_redisom_C"/>
    <property type="match status" value="1"/>
</dbReference>
<dbReference type="Pfam" id="PF02670">
    <property type="entry name" value="DXP_reductoisom"/>
    <property type="match status" value="1"/>
</dbReference>
<dbReference type="Pfam" id="PF13288">
    <property type="entry name" value="DXPR_C"/>
    <property type="match status" value="1"/>
</dbReference>
<dbReference type="PIRSF" id="PIRSF006205">
    <property type="entry name" value="Dxp_reductismrs"/>
    <property type="match status" value="1"/>
</dbReference>
<dbReference type="SUPFAM" id="SSF69055">
    <property type="entry name" value="1-deoxy-D-xylulose-5-phosphate reductoisomerase, C-terminal domain"/>
    <property type="match status" value="1"/>
</dbReference>
<dbReference type="SUPFAM" id="SSF55347">
    <property type="entry name" value="Glyceraldehyde-3-phosphate dehydrogenase-like, C-terminal domain"/>
    <property type="match status" value="1"/>
</dbReference>
<dbReference type="SUPFAM" id="SSF51735">
    <property type="entry name" value="NAD(P)-binding Rossmann-fold domains"/>
    <property type="match status" value="1"/>
</dbReference>
<protein>
    <recommendedName>
        <fullName evidence="1">1-deoxy-D-xylulose 5-phosphate reductoisomerase</fullName>
        <shortName evidence="1">DXP reductoisomerase</shortName>
        <ecNumber evidence="1">1.1.1.267</ecNumber>
    </recommendedName>
    <alternativeName>
        <fullName evidence="1">1-deoxyxylulose-5-phosphate reductoisomerase</fullName>
    </alternativeName>
    <alternativeName>
        <fullName evidence="1">2-C-methyl-D-erythritol 4-phosphate synthase</fullName>
    </alternativeName>
</protein>
<accession>B2V4G1</accession>
<comment type="function">
    <text evidence="1">Catalyzes the NADPH-dependent rearrangement and reduction of 1-deoxy-D-xylulose-5-phosphate (DXP) to 2-C-methyl-D-erythritol 4-phosphate (MEP).</text>
</comment>
<comment type="catalytic activity">
    <reaction evidence="1">
        <text>2-C-methyl-D-erythritol 4-phosphate + NADP(+) = 1-deoxy-D-xylulose 5-phosphate + NADPH + H(+)</text>
        <dbReference type="Rhea" id="RHEA:13717"/>
        <dbReference type="ChEBI" id="CHEBI:15378"/>
        <dbReference type="ChEBI" id="CHEBI:57783"/>
        <dbReference type="ChEBI" id="CHEBI:57792"/>
        <dbReference type="ChEBI" id="CHEBI:58262"/>
        <dbReference type="ChEBI" id="CHEBI:58349"/>
        <dbReference type="EC" id="1.1.1.267"/>
    </reaction>
    <physiologicalReaction direction="right-to-left" evidence="1">
        <dbReference type="Rhea" id="RHEA:13719"/>
    </physiologicalReaction>
</comment>
<comment type="cofactor">
    <cofactor evidence="1">
        <name>Mg(2+)</name>
        <dbReference type="ChEBI" id="CHEBI:18420"/>
    </cofactor>
    <cofactor evidence="1">
        <name>Mn(2+)</name>
        <dbReference type="ChEBI" id="CHEBI:29035"/>
    </cofactor>
</comment>
<comment type="pathway">
    <text evidence="1">Isoprenoid biosynthesis; isopentenyl diphosphate biosynthesis via DXP pathway; isopentenyl diphosphate from 1-deoxy-D-xylulose 5-phosphate: step 1/6.</text>
</comment>
<comment type="similarity">
    <text evidence="1">Belongs to the DXR family.</text>
</comment>
<organism>
    <name type="scientific">Clostridium botulinum (strain Alaska E43 / Type E3)</name>
    <dbReference type="NCBI Taxonomy" id="508767"/>
    <lineage>
        <taxon>Bacteria</taxon>
        <taxon>Bacillati</taxon>
        <taxon>Bacillota</taxon>
        <taxon>Clostridia</taxon>
        <taxon>Eubacteriales</taxon>
        <taxon>Clostridiaceae</taxon>
        <taxon>Clostridium</taxon>
    </lineage>
</organism>
<gene>
    <name evidence="1" type="primary">dxr</name>
    <name type="ordered locus">CLH_1216</name>
</gene>
<proteinExistence type="inferred from homology"/>
<sequence length="385" mass="42791">MKKLSILGVTGSIGTQALDVIKNSNGELKLIGVTANSSVEKMIKIIEEFDPKYVGMMDKTCAGEIKEYCDKNNKSTIVLSEMKGLNKIASLEEIDIVLTSLVGMIGLEPTLEAIKAKKDIALANKETLVVAGELVMSEAKKNNVKILPVDSEHSAIYQSLRGNDLKTLNKIILTASGGPFRGKKICDLNDISVDDALNHPKWNMGRKISIDSATLMNKGLEVIEAHWLFECDYDNIQVVIHPQSIVHSMVEYCDGSIIAQLGAADMRLPIQYALNYTERKNLIAKTLDFYEVSQLTFEKPDLETFKPLKLAFKAGKQGGLMPTILNGANEAAVALFLDEKIEFLDIFNIIENCMNRFEEETKKPLTLENIIELDKKVKKYVVDMK</sequence>
<name>DXR_CLOBA</name>
<evidence type="ECO:0000255" key="1">
    <source>
        <dbReference type="HAMAP-Rule" id="MF_00183"/>
    </source>
</evidence>